<evidence type="ECO:0000250" key="1">
    <source>
        <dbReference type="UniProtKB" id="D3ZMY7"/>
    </source>
</evidence>
<evidence type="ECO:0000250" key="2">
    <source>
        <dbReference type="UniProtKB" id="P49902"/>
    </source>
</evidence>
<evidence type="ECO:0000256" key="3">
    <source>
        <dbReference type="SAM" id="MobiDB-lite"/>
    </source>
</evidence>
<evidence type="ECO:0000305" key="4"/>
<evidence type="ECO:0000312" key="5">
    <source>
        <dbReference type="MGI" id="MGI:2178563"/>
    </source>
</evidence>
<evidence type="ECO:0007744" key="6">
    <source>
    </source>
</evidence>
<feature type="chain" id="PRO_0000310264" description="Cytosolic purine 5'-nucleotidase">
    <location>
        <begin position="1"/>
        <end position="560"/>
    </location>
</feature>
<feature type="region of interest" description="Disordered" evidence="3">
    <location>
        <begin position="541"/>
        <end position="560"/>
    </location>
</feature>
<feature type="region of interest" description="Required for tetramer assembly" evidence="2">
    <location>
        <begin position="548"/>
        <end position="560"/>
    </location>
</feature>
<feature type="compositionally biased region" description="Acidic residues" evidence="3">
    <location>
        <begin position="550"/>
        <end position="560"/>
    </location>
</feature>
<feature type="active site" description="Nucleophile" evidence="2">
    <location>
        <position position="52"/>
    </location>
</feature>
<feature type="active site" description="Proton donor" evidence="2">
    <location>
        <position position="54"/>
    </location>
</feature>
<feature type="binding site" evidence="2">
    <location>
        <position position="52"/>
    </location>
    <ligand>
        <name>IMP</name>
        <dbReference type="ChEBI" id="CHEBI:58053"/>
    </ligand>
</feature>
<feature type="binding site" evidence="2">
    <location>
        <position position="52"/>
    </location>
    <ligand>
        <name>Mg(2+)</name>
        <dbReference type="ChEBI" id="CHEBI:18420"/>
    </ligand>
</feature>
<feature type="binding site" evidence="2">
    <location>
        <position position="54"/>
    </location>
    <ligand>
        <name>IMP</name>
        <dbReference type="ChEBI" id="CHEBI:58053"/>
    </ligand>
</feature>
<feature type="binding site" evidence="2">
    <location>
        <position position="54"/>
    </location>
    <ligand>
        <name>Mg(2+)</name>
        <dbReference type="ChEBI" id="CHEBI:18420"/>
    </ligand>
</feature>
<feature type="binding site" evidence="2">
    <location>
        <position position="144"/>
    </location>
    <ligand>
        <name>ATP</name>
        <dbReference type="ChEBI" id="CHEBI:30616"/>
        <note>allosteric activator</note>
    </ligand>
</feature>
<feature type="binding site" evidence="2">
    <location>
        <position position="154"/>
    </location>
    <ligand>
        <name>ATP</name>
        <dbReference type="ChEBI" id="CHEBI:30616"/>
        <note>allosteric activator</note>
    </ligand>
</feature>
<feature type="binding site" evidence="2">
    <location>
        <position position="202"/>
    </location>
    <ligand>
        <name>IMP</name>
        <dbReference type="ChEBI" id="CHEBI:58053"/>
    </ligand>
</feature>
<feature type="binding site" evidence="2">
    <location>
        <position position="206"/>
    </location>
    <ligand>
        <name>IMP</name>
        <dbReference type="ChEBI" id="CHEBI:58053"/>
    </ligand>
</feature>
<feature type="binding site" evidence="2">
    <location>
        <position position="215"/>
    </location>
    <ligand>
        <name>IMP</name>
        <dbReference type="ChEBI" id="CHEBI:58053"/>
    </ligand>
</feature>
<feature type="binding site" evidence="2">
    <location>
        <position position="249"/>
    </location>
    <ligand>
        <name>IMP</name>
        <dbReference type="ChEBI" id="CHEBI:58053"/>
    </ligand>
</feature>
<feature type="binding site" evidence="2">
    <location>
        <position position="250"/>
    </location>
    <ligand>
        <name>IMP</name>
        <dbReference type="ChEBI" id="CHEBI:58053"/>
    </ligand>
</feature>
<feature type="binding site" evidence="2">
    <location>
        <position position="251"/>
    </location>
    <ligand>
        <name>IMP</name>
        <dbReference type="ChEBI" id="CHEBI:58053"/>
    </ligand>
</feature>
<feature type="binding site" evidence="2">
    <location>
        <position position="292"/>
    </location>
    <ligand>
        <name>IMP</name>
        <dbReference type="ChEBI" id="CHEBI:58053"/>
    </ligand>
</feature>
<feature type="binding site" evidence="2">
    <location>
        <position position="351"/>
    </location>
    <ligand>
        <name>Mg(2+)</name>
        <dbReference type="ChEBI" id="CHEBI:18420"/>
    </ligand>
</feature>
<feature type="binding site" evidence="2">
    <location>
        <position position="453"/>
    </location>
    <ligand>
        <name>ATP</name>
        <dbReference type="ChEBI" id="CHEBI:30616"/>
        <note>allosteric activator</note>
    </ligand>
</feature>
<feature type="binding site" evidence="2">
    <location>
        <position position="456"/>
    </location>
    <ligand>
        <name>ATP</name>
        <dbReference type="ChEBI" id="CHEBI:30616"/>
        <note>allosteric activator</note>
    </ligand>
</feature>
<feature type="modified residue" description="Phosphoserine" evidence="2">
    <location>
        <position position="418"/>
    </location>
</feature>
<feature type="modified residue" description="Phosphoserine" evidence="2">
    <location>
        <position position="502"/>
    </location>
</feature>
<feature type="modified residue" description="Phosphoserine" evidence="2">
    <location>
        <position position="511"/>
    </location>
</feature>
<feature type="modified residue" description="Phosphoserine" evidence="6">
    <location>
        <position position="527"/>
    </location>
</feature>
<feature type="sequence conflict" description="In Ref. 1; BAE21136." evidence="4" ref="1">
    <original>F</original>
    <variation>Y</variation>
    <location>
        <position position="89"/>
    </location>
</feature>
<feature type="sequence conflict" description="In Ref. 1; BAC29555." evidence="4" ref="1">
    <original>K</original>
    <variation>R</variation>
    <location>
        <position position="217"/>
    </location>
</feature>
<feature type="sequence conflict" description="In Ref. 2; AAH64760." evidence="4" ref="2">
    <original>I</original>
    <variation>V</variation>
    <location>
        <position position="531"/>
    </location>
</feature>
<feature type="sequence conflict" description="In Ref. 2; AAH64760." evidence="4" ref="2">
    <original>N</original>
    <variation>D</variation>
    <location>
        <position position="535"/>
    </location>
</feature>
<keyword id="KW-0021">Allosteric enzyme</keyword>
<keyword id="KW-0067">ATP-binding</keyword>
<keyword id="KW-0963">Cytoplasm</keyword>
<keyword id="KW-0378">Hydrolase</keyword>
<keyword id="KW-0460">Magnesium</keyword>
<keyword id="KW-0479">Metal-binding</keyword>
<keyword id="KW-0546">Nucleotide metabolism</keyword>
<keyword id="KW-0547">Nucleotide-binding</keyword>
<keyword id="KW-0597">Phosphoprotein</keyword>
<keyword id="KW-1185">Reference proteome</keyword>
<keyword id="KW-0808">Transferase</keyword>
<comment type="function">
    <text evidence="2">Broad specificity cytosolic 5'-nucleotidase that catalyzes the dephosphorylation of 6-hydroxypurine nucleoside 5'-monophosphates. In addition, possesses a phosphotransferase activity by which it can transfer a phosphate from a donor nucleoside monophosphate to an acceptor nucleoside, preferably inosine, deoxyinosine and guanosine. Has the highest activities for IMP and GMP followed by dIMP, dGMP and XMP. Could also catalyze the transfer of phosphates from pyrimidine monophosphates but with lower efficiency. Through these activities regulates the purine nucleoside/nucleotide pools within the cell.</text>
</comment>
<comment type="catalytic activity">
    <reaction evidence="2">
        <text>a ribonucleoside 5'-phosphate + H2O = a ribonucleoside + phosphate</text>
        <dbReference type="Rhea" id="RHEA:12484"/>
        <dbReference type="ChEBI" id="CHEBI:15377"/>
        <dbReference type="ChEBI" id="CHEBI:18254"/>
        <dbReference type="ChEBI" id="CHEBI:43474"/>
        <dbReference type="ChEBI" id="CHEBI:58043"/>
        <dbReference type="EC" id="3.1.3.5"/>
    </reaction>
    <physiologicalReaction direction="left-to-right" evidence="2">
        <dbReference type="Rhea" id="RHEA:12485"/>
    </physiologicalReaction>
</comment>
<comment type="catalytic activity">
    <reaction evidence="2">
        <text>a 2'-deoxyribonucleoside + a ribonucleoside 5'-phosphate = a ribonucleoside + a 2'-deoxyribonucleoside 5'-phosphate</text>
        <dbReference type="Rhea" id="RHEA:19961"/>
        <dbReference type="ChEBI" id="CHEBI:18254"/>
        <dbReference type="ChEBI" id="CHEBI:18274"/>
        <dbReference type="ChEBI" id="CHEBI:58043"/>
        <dbReference type="ChEBI" id="CHEBI:65317"/>
        <dbReference type="EC" id="2.7.1.77"/>
    </reaction>
</comment>
<comment type="catalytic activity">
    <reaction evidence="2">
        <text>IMP + H2O = inosine + phosphate</text>
        <dbReference type="Rhea" id="RHEA:27718"/>
        <dbReference type="ChEBI" id="CHEBI:15377"/>
        <dbReference type="ChEBI" id="CHEBI:17596"/>
        <dbReference type="ChEBI" id="CHEBI:43474"/>
        <dbReference type="ChEBI" id="CHEBI:58053"/>
        <dbReference type="EC" id="3.1.3.99"/>
    </reaction>
    <physiologicalReaction direction="left-to-right" evidence="2">
        <dbReference type="Rhea" id="RHEA:27719"/>
    </physiologicalReaction>
</comment>
<comment type="catalytic activity">
    <reaction evidence="1">
        <text>GMP + H2O = guanosine + phosphate</text>
        <dbReference type="Rhea" id="RHEA:27714"/>
        <dbReference type="ChEBI" id="CHEBI:15377"/>
        <dbReference type="ChEBI" id="CHEBI:16750"/>
        <dbReference type="ChEBI" id="CHEBI:43474"/>
        <dbReference type="ChEBI" id="CHEBI:58115"/>
    </reaction>
    <physiologicalReaction direction="left-to-right" evidence="1">
        <dbReference type="Rhea" id="RHEA:27715"/>
    </physiologicalReaction>
</comment>
<comment type="catalytic activity">
    <reaction evidence="2">
        <text>dGMP + H2O = 2'-deoxyguanosine + phosphate</text>
        <dbReference type="Rhea" id="RHEA:29379"/>
        <dbReference type="ChEBI" id="CHEBI:15377"/>
        <dbReference type="ChEBI" id="CHEBI:17172"/>
        <dbReference type="ChEBI" id="CHEBI:43474"/>
        <dbReference type="ChEBI" id="CHEBI:57673"/>
    </reaction>
    <physiologicalReaction direction="left-to-right" evidence="2">
        <dbReference type="Rhea" id="RHEA:29380"/>
    </physiologicalReaction>
</comment>
<comment type="catalytic activity">
    <reaction evidence="1">
        <text>dIMP + H2O = 2'-deoxyinosine + phosphate</text>
        <dbReference type="Rhea" id="RHEA:29383"/>
        <dbReference type="ChEBI" id="CHEBI:15377"/>
        <dbReference type="ChEBI" id="CHEBI:28997"/>
        <dbReference type="ChEBI" id="CHEBI:43474"/>
        <dbReference type="ChEBI" id="CHEBI:61194"/>
    </reaction>
    <physiologicalReaction direction="left-to-right" evidence="1">
        <dbReference type="Rhea" id="RHEA:29384"/>
    </physiologicalReaction>
</comment>
<comment type="catalytic activity">
    <reaction evidence="1">
        <text>XMP + H2O = xanthosine + phosphate</text>
        <dbReference type="Rhea" id="RHEA:28530"/>
        <dbReference type="ChEBI" id="CHEBI:15377"/>
        <dbReference type="ChEBI" id="CHEBI:18107"/>
        <dbReference type="ChEBI" id="CHEBI:43474"/>
        <dbReference type="ChEBI" id="CHEBI:57464"/>
    </reaction>
    <physiologicalReaction direction="left-to-right" evidence="1">
        <dbReference type="Rhea" id="RHEA:28531"/>
    </physiologicalReaction>
</comment>
<comment type="catalytic activity">
    <reaction evidence="2">
        <text>inosine + GMP = guanosine + IMP</text>
        <dbReference type="Rhea" id="RHEA:69584"/>
        <dbReference type="ChEBI" id="CHEBI:16750"/>
        <dbReference type="ChEBI" id="CHEBI:17596"/>
        <dbReference type="ChEBI" id="CHEBI:58053"/>
        <dbReference type="ChEBI" id="CHEBI:58115"/>
    </reaction>
</comment>
<comment type="catalytic activity">
    <reaction evidence="2">
        <text>dGMP + inosine = 2'-deoxyguanosine + IMP</text>
        <dbReference type="Rhea" id="RHEA:69580"/>
        <dbReference type="ChEBI" id="CHEBI:17172"/>
        <dbReference type="ChEBI" id="CHEBI:17596"/>
        <dbReference type="ChEBI" id="CHEBI:57673"/>
        <dbReference type="ChEBI" id="CHEBI:58053"/>
    </reaction>
</comment>
<comment type="catalytic activity">
    <reaction evidence="2">
        <text>dIMP + inosine = 2'-deoxyinosine + IMP</text>
        <dbReference type="Rhea" id="RHEA:69572"/>
        <dbReference type="ChEBI" id="CHEBI:17596"/>
        <dbReference type="ChEBI" id="CHEBI:28997"/>
        <dbReference type="ChEBI" id="CHEBI:58053"/>
        <dbReference type="ChEBI" id="CHEBI:61194"/>
    </reaction>
</comment>
<comment type="catalytic activity">
    <reaction evidence="2">
        <text>inosine + UMP = uridine + IMP</text>
        <dbReference type="Rhea" id="RHEA:69588"/>
        <dbReference type="ChEBI" id="CHEBI:16704"/>
        <dbReference type="ChEBI" id="CHEBI:17596"/>
        <dbReference type="ChEBI" id="CHEBI:57865"/>
        <dbReference type="ChEBI" id="CHEBI:58053"/>
    </reaction>
</comment>
<comment type="catalytic activity">
    <reaction evidence="2">
        <text>inosine + CMP = cytidine + IMP</text>
        <dbReference type="Rhea" id="RHEA:69592"/>
        <dbReference type="ChEBI" id="CHEBI:17562"/>
        <dbReference type="ChEBI" id="CHEBI:17596"/>
        <dbReference type="ChEBI" id="CHEBI:58053"/>
        <dbReference type="ChEBI" id="CHEBI:60377"/>
    </reaction>
</comment>
<comment type="catalytic activity">
    <reaction evidence="2">
        <text>inosine + AMP = IMP + adenosine</text>
        <dbReference type="Rhea" id="RHEA:69596"/>
        <dbReference type="ChEBI" id="CHEBI:16335"/>
        <dbReference type="ChEBI" id="CHEBI:17596"/>
        <dbReference type="ChEBI" id="CHEBI:58053"/>
        <dbReference type="ChEBI" id="CHEBI:456215"/>
    </reaction>
</comment>
<comment type="cofactor">
    <cofactor evidence="2">
        <name>Mg(2+)</name>
        <dbReference type="ChEBI" id="CHEBI:18420"/>
    </cofactor>
    <text evidence="2">Binds 1 Mg(2+) ion per subunit.</text>
</comment>
<comment type="activity regulation">
    <text evidence="2">Allosterically activated by various compounds including ATP, 2,3-BPG/2,3-Bisphosphoglyceric acid and Ap4A/P1,P4-bis(5'-adenosyl) tetraphosphate. Binding of an allosteric activator is a prerequisiste to magnesium and substrate binding. Inhibited by inorganic phosphate.</text>
</comment>
<comment type="subunit">
    <text evidence="2">Homotetramer.</text>
</comment>
<comment type="subcellular location">
    <subcellularLocation>
        <location evidence="2">Cytoplasm</location>
        <location evidence="2">Cytosol</location>
    </subcellularLocation>
</comment>
<comment type="similarity">
    <text evidence="4">Belongs to the 5'(3')-deoxyribonucleotidase family.</text>
</comment>
<protein>
    <recommendedName>
        <fullName evidence="2">Cytosolic purine 5'-nucleotidase</fullName>
        <ecNumber evidence="2">3.1.3.5</ecNumber>
        <ecNumber evidence="2">3.1.3.99</ecNumber>
    </recommendedName>
    <alternativeName>
        <fullName evidence="2">Cytosolic nucleoside phosphotransferase 5'N</fullName>
        <ecNumber evidence="2">2.7.1.77</ecNumber>
    </alternativeName>
</protein>
<organism>
    <name type="scientific">Mus musculus</name>
    <name type="common">Mouse</name>
    <dbReference type="NCBI Taxonomy" id="10090"/>
    <lineage>
        <taxon>Eukaryota</taxon>
        <taxon>Metazoa</taxon>
        <taxon>Chordata</taxon>
        <taxon>Craniata</taxon>
        <taxon>Vertebrata</taxon>
        <taxon>Euteleostomi</taxon>
        <taxon>Mammalia</taxon>
        <taxon>Eutheria</taxon>
        <taxon>Euarchontoglires</taxon>
        <taxon>Glires</taxon>
        <taxon>Rodentia</taxon>
        <taxon>Myomorpha</taxon>
        <taxon>Muroidea</taxon>
        <taxon>Muridae</taxon>
        <taxon>Murinae</taxon>
        <taxon>Mus</taxon>
        <taxon>Mus</taxon>
    </lineage>
</organism>
<sequence length="560" mass="64809">MTTSWSDRLQNAADVPANMDKHALKKYRREAYHRVFVNRSLAMEKIKCFGFDMDYTLAVYKSPEYESLGFELTVERLVSIGYPQELLSFAYDSTFPTRGLVFDTLYGNLLKVDAYGNLLVCAHGFNFIRGPETREQYPNKFIQRDDTERFYILNTLFNLPETYLLACLVDFFTNCPRYTSCDTGFKDGDLFMSYRSMFQDVRDAVDWVHYKGSLKEKTVENLEKYVVKDGKLPLLLSRMKEVGKVFLATNSDYKYTDKIMTYLFDFPHGPKPGSSHRPWQSYFDLILVDARKPLFFGEGTVLRQVDTKTGKLKIGTYTGPLQHGIVYSGGSSDTICDLLGAKGKDILYIGDHIFGDILKSKKRQGWRTFLVIPELAQELHVWTDKSSLFEELQSLDIFLAELYKHLDSSSNERPDISSIQRRIKKVTHDMDMCYGMMGSLFRSGSRQTLFASQVMRYADLYAASFINLLYYPFSYLFRAAHVLMPHESTVEHTHVDINEMESPLATRNRTSVDFKDTDYKRHQLTRSISEIKPPNLFPLAPQEITHCHDEDDDEEEEEEE</sequence>
<gene>
    <name evidence="5" type="primary">Nt5c2</name>
</gene>
<reference key="1">
    <citation type="journal article" date="2005" name="Science">
        <title>The transcriptional landscape of the mammalian genome.</title>
        <authorList>
            <person name="Carninci P."/>
            <person name="Kasukawa T."/>
            <person name="Katayama S."/>
            <person name="Gough J."/>
            <person name="Frith M.C."/>
            <person name="Maeda N."/>
            <person name="Oyama R."/>
            <person name="Ravasi T."/>
            <person name="Lenhard B."/>
            <person name="Wells C."/>
            <person name="Kodzius R."/>
            <person name="Shimokawa K."/>
            <person name="Bajic V.B."/>
            <person name="Brenner S.E."/>
            <person name="Batalov S."/>
            <person name="Forrest A.R."/>
            <person name="Zavolan M."/>
            <person name="Davis M.J."/>
            <person name="Wilming L.G."/>
            <person name="Aidinis V."/>
            <person name="Allen J.E."/>
            <person name="Ambesi-Impiombato A."/>
            <person name="Apweiler R."/>
            <person name="Aturaliya R.N."/>
            <person name="Bailey T.L."/>
            <person name="Bansal M."/>
            <person name="Baxter L."/>
            <person name="Beisel K.W."/>
            <person name="Bersano T."/>
            <person name="Bono H."/>
            <person name="Chalk A.M."/>
            <person name="Chiu K.P."/>
            <person name="Choudhary V."/>
            <person name="Christoffels A."/>
            <person name="Clutterbuck D.R."/>
            <person name="Crowe M.L."/>
            <person name="Dalla E."/>
            <person name="Dalrymple B.P."/>
            <person name="de Bono B."/>
            <person name="Della Gatta G."/>
            <person name="di Bernardo D."/>
            <person name="Down T."/>
            <person name="Engstrom P."/>
            <person name="Fagiolini M."/>
            <person name="Faulkner G."/>
            <person name="Fletcher C.F."/>
            <person name="Fukushima T."/>
            <person name="Furuno M."/>
            <person name="Futaki S."/>
            <person name="Gariboldi M."/>
            <person name="Georgii-Hemming P."/>
            <person name="Gingeras T.R."/>
            <person name="Gojobori T."/>
            <person name="Green R.E."/>
            <person name="Gustincich S."/>
            <person name="Harbers M."/>
            <person name="Hayashi Y."/>
            <person name="Hensch T.K."/>
            <person name="Hirokawa N."/>
            <person name="Hill D."/>
            <person name="Huminiecki L."/>
            <person name="Iacono M."/>
            <person name="Ikeo K."/>
            <person name="Iwama A."/>
            <person name="Ishikawa T."/>
            <person name="Jakt M."/>
            <person name="Kanapin A."/>
            <person name="Katoh M."/>
            <person name="Kawasawa Y."/>
            <person name="Kelso J."/>
            <person name="Kitamura H."/>
            <person name="Kitano H."/>
            <person name="Kollias G."/>
            <person name="Krishnan S.P."/>
            <person name="Kruger A."/>
            <person name="Kummerfeld S.K."/>
            <person name="Kurochkin I.V."/>
            <person name="Lareau L.F."/>
            <person name="Lazarevic D."/>
            <person name="Lipovich L."/>
            <person name="Liu J."/>
            <person name="Liuni S."/>
            <person name="McWilliam S."/>
            <person name="Madan Babu M."/>
            <person name="Madera M."/>
            <person name="Marchionni L."/>
            <person name="Matsuda H."/>
            <person name="Matsuzawa S."/>
            <person name="Miki H."/>
            <person name="Mignone F."/>
            <person name="Miyake S."/>
            <person name="Morris K."/>
            <person name="Mottagui-Tabar S."/>
            <person name="Mulder N."/>
            <person name="Nakano N."/>
            <person name="Nakauchi H."/>
            <person name="Ng P."/>
            <person name="Nilsson R."/>
            <person name="Nishiguchi S."/>
            <person name="Nishikawa S."/>
            <person name="Nori F."/>
            <person name="Ohara O."/>
            <person name="Okazaki Y."/>
            <person name="Orlando V."/>
            <person name="Pang K.C."/>
            <person name="Pavan W.J."/>
            <person name="Pavesi G."/>
            <person name="Pesole G."/>
            <person name="Petrovsky N."/>
            <person name="Piazza S."/>
            <person name="Reed J."/>
            <person name="Reid J.F."/>
            <person name="Ring B.Z."/>
            <person name="Ringwald M."/>
            <person name="Rost B."/>
            <person name="Ruan Y."/>
            <person name="Salzberg S.L."/>
            <person name="Sandelin A."/>
            <person name="Schneider C."/>
            <person name="Schoenbach C."/>
            <person name="Sekiguchi K."/>
            <person name="Semple C.A."/>
            <person name="Seno S."/>
            <person name="Sessa L."/>
            <person name="Sheng Y."/>
            <person name="Shibata Y."/>
            <person name="Shimada H."/>
            <person name="Shimada K."/>
            <person name="Silva D."/>
            <person name="Sinclair B."/>
            <person name="Sperling S."/>
            <person name="Stupka E."/>
            <person name="Sugiura K."/>
            <person name="Sultana R."/>
            <person name="Takenaka Y."/>
            <person name="Taki K."/>
            <person name="Tammoja K."/>
            <person name="Tan S.L."/>
            <person name="Tang S."/>
            <person name="Taylor M.S."/>
            <person name="Tegner J."/>
            <person name="Teichmann S.A."/>
            <person name="Ueda H.R."/>
            <person name="van Nimwegen E."/>
            <person name="Verardo R."/>
            <person name="Wei C.L."/>
            <person name="Yagi K."/>
            <person name="Yamanishi H."/>
            <person name="Zabarovsky E."/>
            <person name="Zhu S."/>
            <person name="Zimmer A."/>
            <person name="Hide W."/>
            <person name="Bult C."/>
            <person name="Grimmond S.M."/>
            <person name="Teasdale R.D."/>
            <person name="Liu E.T."/>
            <person name="Brusic V."/>
            <person name="Quackenbush J."/>
            <person name="Wahlestedt C."/>
            <person name="Mattick J.S."/>
            <person name="Hume D.A."/>
            <person name="Kai C."/>
            <person name="Sasaki D."/>
            <person name="Tomaru Y."/>
            <person name="Fukuda S."/>
            <person name="Kanamori-Katayama M."/>
            <person name="Suzuki M."/>
            <person name="Aoki J."/>
            <person name="Arakawa T."/>
            <person name="Iida J."/>
            <person name="Imamura K."/>
            <person name="Itoh M."/>
            <person name="Kato T."/>
            <person name="Kawaji H."/>
            <person name="Kawagashira N."/>
            <person name="Kawashima T."/>
            <person name="Kojima M."/>
            <person name="Kondo S."/>
            <person name="Konno H."/>
            <person name="Nakano K."/>
            <person name="Ninomiya N."/>
            <person name="Nishio T."/>
            <person name="Okada M."/>
            <person name="Plessy C."/>
            <person name="Shibata K."/>
            <person name="Shiraki T."/>
            <person name="Suzuki S."/>
            <person name="Tagami M."/>
            <person name="Waki K."/>
            <person name="Watahiki A."/>
            <person name="Okamura-Oho Y."/>
            <person name="Suzuki H."/>
            <person name="Kawai J."/>
            <person name="Hayashizaki Y."/>
        </authorList>
    </citation>
    <scope>NUCLEOTIDE SEQUENCE [LARGE SCALE MRNA]</scope>
    <source>
        <strain>C57BL/6J</strain>
        <strain>NOD</strain>
        <tissue>Bone</tissue>
        <tissue>Head</tissue>
        <tissue>Small intestine</tissue>
        <tissue>Thymus</tissue>
    </source>
</reference>
<reference key="2">
    <citation type="journal article" date="2004" name="Genome Res.">
        <title>The status, quality, and expansion of the NIH full-length cDNA project: the Mammalian Gene Collection (MGC).</title>
        <authorList>
            <consortium name="The MGC Project Team"/>
        </authorList>
    </citation>
    <scope>NUCLEOTIDE SEQUENCE [LARGE SCALE MRNA]</scope>
    <source>
        <strain>C57BL/6J</strain>
        <tissue>Embryo</tissue>
    </source>
</reference>
<reference key="3">
    <citation type="journal article" date="2007" name="Proc. Natl. Acad. Sci. U.S.A.">
        <title>Large-scale phosphorylation analysis of mouse liver.</title>
        <authorList>
            <person name="Villen J."/>
            <person name="Beausoleil S.A."/>
            <person name="Gerber S.A."/>
            <person name="Gygi S.P."/>
        </authorList>
    </citation>
    <scope>IDENTIFICATION BY MASS SPECTROMETRY [LARGE SCALE ANALYSIS]</scope>
    <source>
        <tissue>Liver</tissue>
    </source>
</reference>
<reference key="4">
    <citation type="journal article" date="2010" name="Cell">
        <title>A tissue-specific atlas of mouse protein phosphorylation and expression.</title>
        <authorList>
            <person name="Huttlin E.L."/>
            <person name="Jedrychowski M.P."/>
            <person name="Elias J.E."/>
            <person name="Goswami T."/>
            <person name="Rad R."/>
            <person name="Beausoleil S.A."/>
            <person name="Villen J."/>
            <person name="Haas W."/>
            <person name="Sowa M.E."/>
            <person name="Gygi S.P."/>
        </authorList>
    </citation>
    <scope>PHOSPHORYLATION [LARGE SCALE ANALYSIS] AT SER-527</scope>
    <scope>IDENTIFICATION BY MASS SPECTROMETRY [LARGE SCALE ANALYSIS]</scope>
    <source>
        <tissue>Brain</tissue>
        <tissue>Brown adipose tissue</tissue>
        <tissue>Heart</tissue>
        <tissue>Kidney</tissue>
        <tissue>Liver</tissue>
        <tissue>Lung</tissue>
        <tissue>Pancreas</tissue>
        <tissue>Spleen</tissue>
        <tissue>Testis</tissue>
    </source>
</reference>
<proteinExistence type="evidence at protein level"/>
<dbReference type="EC" id="3.1.3.5" evidence="2"/>
<dbReference type="EC" id="3.1.3.99" evidence="2"/>
<dbReference type="EC" id="2.7.1.77" evidence="2"/>
<dbReference type="EMBL" id="AK008045">
    <property type="protein sequence ID" value="BAB25428.1"/>
    <property type="molecule type" value="mRNA"/>
</dbReference>
<dbReference type="EMBL" id="AK036730">
    <property type="protein sequence ID" value="BAC29555.1"/>
    <property type="molecule type" value="mRNA"/>
</dbReference>
<dbReference type="EMBL" id="AK132384">
    <property type="protein sequence ID" value="BAE21136.1"/>
    <property type="molecule type" value="mRNA"/>
</dbReference>
<dbReference type="EMBL" id="AK147901">
    <property type="protein sequence ID" value="BAE28216.1"/>
    <property type="molecule type" value="mRNA"/>
</dbReference>
<dbReference type="EMBL" id="AK169616">
    <property type="protein sequence ID" value="BAE41263.1"/>
    <property type="molecule type" value="mRNA"/>
</dbReference>
<dbReference type="EMBL" id="BC064760">
    <property type="protein sequence ID" value="AAH64760.1"/>
    <property type="molecule type" value="mRNA"/>
</dbReference>
<dbReference type="CCDS" id="CCDS29883.1"/>
<dbReference type="RefSeq" id="NP_001157835.1">
    <property type="nucleotide sequence ID" value="NM_001164363.1"/>
</dbReference>
<dbReference type="RefSeq" id="NP_001157837.1">
    <property type="nucleotide sequence ID" value="NM_001164365.1"/>
</dbReference>
<dbReference type="RefSeq" id="NP_001363995.1">
    <property type="nucleotide sequence ID" value="NM_001377066.1"/>
</dbReference>
<dbReference type="RefSeq" id="NP_001363997.1">
    <property type="nucleotide sequence ID" value="NM_001377068.1"/>
</dbReference>
<dbReference type="RefSeq" id="NP_001363998.1">
    <property type="nucleotide sequence ID" value="NM_001377069.1"/>
</dbReference>
<dbReference type="RefSeq" id="NP_084086.3">
    <property type="nucleotide sequence ID" value="NM_029810.4"/>
</dbReference>
<dbReference type="RefSeq" id="XP_006527521.1">
    <property type="nucleotide sequence ID" value="XM_006527458.2"/>
</dbReference>
<dbReference type="RefSeq" id="XP_006527522.1">
    <property type="nucleotide sequence ID" value="XM_006527459.2"/>
</dbReference>
<dbReference type="RefSeq" id="XP_036017617.1">
    <property type="nucleotide sequence ID" value="XM_036161724.1"/>
</dbReference>
<dbReference type="SMR" id="Q3V1L4"/>
<dbReference type="BioGRID" id="218423">
    <property type="interactions" value="17"/>
</dbReference>
<dbReference type="FunCoup" id="Q3V1L4">
    <property type="interactions" value="2071"/>
</dbReference>
<dbReference type="IntAct" id="Q3V1L4">
    <property type="interactions" value="2"/>
</dbReference>
<dbReference type="MINT" id="Q3V1L4"/>
<dbReference type="STRING" id="10090.ENSMUSP00000130898"/>
<dbReference type="iPTMnet" id="Q3V1L4"/>
<dbReference type="PhosphoSitePlus" id="Q3V1L4"/>
<dbReference type="SwissPalm" id="Q3V1L4"/>
<dbReference type="jPOST" id="Q3V1L4"/>
<dbReference type="PaxDb" id="10090-ENSMUSP00000130898"/>
<dbReference type="ProteomicsDB" id="285999"/>
<dbReference type="Pumba" id="Q3V1L4"/>
<dbReference type="Antibodypedia" id="18107">
    <property type="antibodies" value="243 antibodies from 32 providers"/>
</dbReference>
<dbReference type="DNASU" id="76952"/>
<dbReference type="Ensembl" id="ENSMUST00000168536.9">
    <property type="protein sequence ID" value="ENSMUSP00000129126.2"/>
    <property type="gene ID" value="ENSMUSG00000025041.18"/>
</dbReference>
<dbReference type="Ensembl" id="ENSMUST00000236501.2">
    <property type="protein sequence ID" value="ENSMUSP00000158280.2"/>
    <property type="gene ID" value="ENSMUSG00000025041.18"/>
</dbReference>
<dbReference type="GeneID" id="76952"/>
<dbReference type="KEGG" id="mmu:76952"/>
<dbReference type="UCSC" id="uc008hug.2">
    <property type="organism name" value="mouse"/>
</dbReference>
<dbReference type="AGR" id="MGI:2178563"/>
<dbReference type="CTD" id="22978"/>
<dbReference type="MGI" id="MGI:2178563">
    <property type="gene designation" value="Nt5c2"/>
</dbReference>
<dbReference type="VEuPathDB" id="HostDB:ENSMUSG00000025041"/>
<dbReference type="eggNOG" id="KOG2469">
    <property type="taxonomic scope" value="Eukaryota"/>
</dbReference>
<dbReference type="GeneTree" id="ENSGT00940000162369"/>
<dbReference type="HOGENOM" id="CLU_017845_3_0_1"/>
<dbReference type="InParanoid" id="Q3V1L4"/>
<dbReference type="OMA" id="WDYTDAV"/>
<dbReference type="OrthoDB" id="10252832at2759"/>
<dbReference type="PhylomeDB" id="Q3V1L4"/>
<dbReference type="Reactome" id="R-MMU-2161541">
    <property type="pathway name" value="Abacavir metabolism"/>
</dbReference>
<dbReference type="Reactome" id="R-MMU-74259">
    <property type="pathway name" value="Purine catabolism"/>
</dbReference>
<dbReference type="Reactome" id="R-MMU-9755088">
    <property type="pathway name" value="Ribavirin ADME"/>
</dbReference>
<dbReference type="SABIO-RK" id="Q3V1L4"/>
<dbReference type="BioGRID-ORCS" id="76952">
    <property type="hits" value="1 hit in 79 CRISPR screens"/>
</dbReference>
<dbReference type="ChiTaRS" id="Nt5c2">
    <property type="organism name" value="mouse"/>
</dbReference>
<dbReference type="PRO" id="PR:Q3V1L4"/>
<dbReference type="Proteomes" id="UP000000589">
    <property type="component" value="Chromosome 19"/>
</dbReference>
<dbReference type="RNAct" id="Q3V1L4">
    <property type="molecule type" value="protein"/>
</dbReference>
<dbReference type="Bgee" id="ENSMUSG00000025041">
    <property type="expression patterns" value="Expressed in spermatocyte and 263 other cell types or tissues"/>
</dbReference>
<dbReference type="ExpressionAtlas" id="Q3V1L4">
    <property type="expression patterns" value="baseline and differential"/>
</dbReference>
<dbReference type="GO" id="GO:0005829">
    <property type="term" value="C:cytosol"/>
    <property type="evidence" value="ECO:0000314"/>
    <property type="project" value="MGI"/>
</dbReference>
<dbReference type="GO" id="GO:0008253">
    <property type="term" value="F:5'-nucleotidase activity"/>
    <property type="evidence" value="ECO:0000250"/>
    <property type="project" value="UniProtKB"/>
</dbReference>
<dbReference type="GO" id="GO:0005524">
    <property type="term" value="F:ATP binding"/>
    <property type="evidence" value="ECO:0000250"/>
    <property type="project" value="UniProtKB"/>
</dbReference>
<dbReference type="GO" id="GO:0050484">
    <property type="term" value="F:GMP 5'-nucleotidase activity"/>
    <property type="evidence" value="ECO:0000314"/>
    <property type="project" value="MGI"/>
</dbReference>
<dbReference type="GO" id="GO:0042802">
    <property type="term" value="F:identical protein binding"/>
    <property type="evidence" value="ECO:0000250"/>
    <property type="project" value="UniProtKB"/>
</dbReference>
<dbReference type="GO" id="GO:0050483">
    <property type="term" value="F:IMP 5'-nucleotidase activity"/>
    <property type="evidence" value="ECO:0000250"/>
    <property type="project" value="UniProtKB"/>
</dbReference>
<dbReference type="GO" id="GO:0046872">
    <property type="term" value="F:metal ion binding"/>
    <property type="evidence" value="ECO:0007669"/>
    <property type="project" value="UniProtKB-KW"/>
</dbReference>
<dbReference type="GO" id="GO:0050146">
    <property type="term" value="F:nucleoside phosphotransferase activity"/>
    <property type="evidence" value="ECO:0000250"/>
    <property type="project" value="UniProtKB"/>
</dbReference>
<dbReference type="GO" id="GO:0061630">
    <property type="term" value="F:ubiquitin protein ligase activity"/>
    <property type="evidence" value="ECO:0007669"/>
    <property type="project" value="Ensembl"/>
</dbReference>
<dbReference type="GO" id="GO:0106411">
    <property type="term" value="F:XMP 5'-nucleosidase activity"/>
    <property type="evidence" value="ECO:0007669"/>
    <property type="project" value="RHEA"/>
</dbReference>
<dbReference type="GO" id="GO:0000255">
    <property type="term" value="P:allantoin metabolic process"/>
    <property type="evidence" value="ECO:0000314"/>
    <property type="project" value="MGI"/>
</dbReference>
<dbReference type="GO" id="GO:0043605">
    <property type="term" value="P:amide catabolic process"/>
    <property type="evidence" value="ECO:0000314"/>
    <property type="project" value="MGI"/>
</dbReference>
<dbReference type="GO" id="GO:0046055">
    <property type="term" value="P:dGMP catabolic process"/>
    <property type="evidence" value="ECO:0000314"/>
    <property type="project" value="MGI"/>
</dbReference>
<dbReference type="GO" id="GO:0046038">
    <property type="term" value="P:GMP catabolic process"/>
    <property type="evidence" value="ECO:0000314"/>
    <property type="project" value="MGI"/>
</dbReference>
<dbReference type="GO" id="GO:0006202">
    <property type="term" value="P:GMP catabolic process to guanine"/>
    <property type="evidence" value="ECO:0000314"/>
    <property type="project" value="MGI"/>
</dbReference>
<dbReference type="GO" id="GO:0006204">
    <property type="term" value="P:IMP catabolic process"/>
    <property type="evidence" value="ECO:0000266"/>
    <property type="project" value="MGI"/>
</dbReference>
<dbReference type="GO" id="GO:0046040">
    <property type="term" value="P:IMP metabolic process"/>
    <property type="evidence" value="ECO:0000250"/>
    <property type="project" value="UniProtKB"/>
</dbReference>
<dbReference type="GO" id="GO:0050689">
    <property type="term" value="P:negative regulation of defense response to virus by host"/>
    <property type="evidence" value="ECO:0007669"/>
    <property type="project" value="Ensembl"/>
</dbReference>
<dbReference type="GO" id="GO:0070936">
    <property type="term" value="P:protein K48-linked ubiquitination"/>
    <property type="evidence" value="ECO:0007669"/>
    <property type="project" value="Ensembl"/>
</dbReference>
<dbReference type="CDD" id="cd07522">
    <property type="entry name" value="HAD_cN-II"/>
    <property type="match status" value="1"/>
</dbReference>
<dbReference type="FunFam" id="3.40.50.1000:FF:000021">
    <property type="entry name" value="NT5C2 isoform 1"/>
    <property type="match status" value="1"/>
</dbReference>
<dbReference type="Gene3D" id="3.40.50.1000">
    <property type="entry name" value="HAD superfamily/HAD-like"/>
    <property type="match status" value="2"/>
</dbReference>
<dbReference type="InterPro" id="IPR036412">
    <property type="entry name" value="HAD-like_sf"/>
</dbReference>
<dbReference type="InterPro" id="IPR008380">
    <property type="entry name" value="HAD-SF_hydro_IG_5-nucl"/>
</dbReference>
<dbReference type="InterPro" id="IPR023214">
    <property type="entry name" value="HAD_sf"/>
</dbReference>
<dbReference type="InterPro" id="IPR016695">
    <property type="entry name" value="Pur_nucleotidase"/>
</dbReference>
<dbReference type="NCBIfam" id="TIGR02244">
    <property type="entry name" value="HAD-IG-Ncltidse"/>
    <property type="match status" value="1"/>
</dbReference>
<dbReference type="PANTHER" id="PTHR12103">
    <property type="entry name" value="5'-NUCLEOTIDASE DOMAIN-CONTAINING"/>
    <property type="match status" value="1"/>
</dbReference>
<dbReference type="PANTHER" id="PTHR12103:SF17">
    <property type="entry name" value="CYTOSOLIC PURINE 5'-NUCLEOTIDASE"/>
    <property type="match status" value="1"/>
</dbReference>
<dbReference type="Pfam" id="PF05761">
    <property type="entry name" value="5_nucleotid"/>
    <property type="match status" value="1"/>
</dbReference>
<dbReference type="PIRSF" id="PIRSF017434">
    <property type="entry name" value="Purine_5'-nucleotidase"/>
    <property type="match status" value="1"/>
</dbReference>
<dbReference type="SUPFAM" id="SSF56784">
    <property type="entry name" value="HAD-like"/>
    <property type="match status" value="1"/>
</dbReference>
<name>5NTC_MOUSE</name>
<accession>Q3V1L4</accession>
<accession>Q6P223</accession>
<accession>Q8BZ43</accession>
<accession>Q9D8G6</accession>